<feature type="chain" id="PRO_0000115436" description="Small ribosomal subunit protein uS15">
    <location>
        <begin position="1"/>
        <end position="89"/>
    </location>
</feature>
<sequence length="89" mass="10139">MSLSVEAKAKIVADFGRGTNDSGSTEVQVALLTAQINHLQGHFSEHKKDHHSRRGLLRMVSQRRKLLDYLKRKDVARYTSLIARLGLRR</sequence>
<organism>
    <name type="scientific">Pectobacterium atrosepticum (strain SCRI 1043 / ATCC BAA-672)</name>
    <name type="common">Erwinia carotovora subsp. atroseptica</name>
    <dbReference type="NCBI Taxonomy" id="218491"/>
    <lineage>
        <taxon>Bacteria</taxon>
        <taxon>Pseudomonadati</taxon>
        <taxon>Pseudomonadota</taxon>
        <taxon>Gammaproteobacteria</taxon>
        <taxon>Enterobacterales</taxon>
        <taxon>Pectobacteriaceae</taxon>
        <taxon>Pectobacterium</taxon>
    </lineage>
</organism>
<accession>Q6D9A2</accession>
<reference key="1">
    <citation type="journal article" date="2004" name="Proc. Natl. Acad. Sci. U.S.A.">
        <title>Genome sequence of the enterobacterial phytopathogen Erwinia carotovora subsp. atroseptica and characterization of virulence factors.</title>
        <authorList>
            <person name="Bell K.S."/>
            <person name="Sebaihia M."/>
            <person name="Pritchard L."/>
            <person name="Holden M.T.G."/>
            <person name="Hyman L.J."/>
            <person name="Holeva M.C."/>
            <person name="Thomson N.R."/>
            <person name="Bentley S.D."/>
            <person name="Churcher L.J.C."/>
            <person name="Mungall K."/>
            <person name="Atkin R."/>
            <person name="Bason N."/>
            <person name="Brooks K."/>
            <person name="Chillingworth T."/>
            <person name="Clark K."/>
            <person name="Doggett J."/>
            <person name="Fraser A."/>
            <person name="Hance Z."/>
            <person name="Hauser H."/>
            <person name="Jagels K."/>
            <person name="Moule S."/>
            <person name="Norbertczak H."/>
            <person name="Ormond D."/>
            <person name="Price C."/>
            <person name="Quail M.A."/>
            <person name="Sanders M."/>
            <person name="Walker D."/>
            <person name="Whitehead S."/>
            <person name="Salmond G.P.C."/>
            <person name="Birch P.R.J."/>
            <person name="Parkhill J."/>
            <person name="Toth I.K."/>
        </authorList>
    </citation>
    <scope>NUCLEOTIDE SEQUENCE [LARGE SCALE GENOMIC DNA]</scope>
    <source>
        <strain>SCRI 1043 / ATCC BAA-672</strain>
    </source>
</reference>
<keyword id="KW-1185">Reference proteome</keyword>
<keyword id="KW-0687">Ribonucleoprotein</keyword>
<keyword id="KW-0689">Ribosomal protein</keyword>
<keyword id="KW-0694">RNA-binding</keyword>
<keyword id="KW-0699">rRNA-binding</keyword>
<dbReference type="EMBL" id="BX950851">
    <property type="protein sequence ID" value="CAG73630.1"/>
    <property type="molecule type" value="Genomic_DNA"/>
</dbReference>
<dbReference type="RefSeq" id="WP_005971532.1">
    <property type="nucleotide sequence ID" value="NC_004547.2"/>
</dbReference>
<dbReference type="SMR" id="Q6D9A2"/>
<dbReference type="STRING" id="218491.ECA0715"/>
<dbReference type="GeneID" id="90769928"/>
<dbReference type="KEGG" id="eca:ECA0715"/>
<dbReference type="eggNOG" id="COG0184">
    <property type="taxonomic scope" value="Bacteria"/>
</dbReference>
<dbReference type="HOGENOM" id="CLU_148518_0_0_6"/>
<dbReference type="OrthoDB" id="9799262at2"/>
<dbReference type="Proteomes" id="UP000007966">
    <property type="component" value="Chromosome"/>
</dbReference>
<dbReference type="GO" id="GO:0022627">
    <property type="term" value="C:cytosolic small ribosomal subunit"/>
    <property type="evidence" value="ECO:0007669"/>
    <property type="project" value="TreeGrafter"/>
</dbReference>
<dbReference type="GO" id="GO:0019843">
    <property type="term" value="F:rRNA binding"/>
    <property type="evidence" value="ECO:0007669"/>
    <property type="project" value="UniProtKB-UniRule"/>
</dbReference>
<dbReference type="GO" id="GO:0003735">
    <property type="term" value="F:structural constituent of ribosome"/>
    <property type="evidence" value="ECO:0007669"/>
    <property type="project" value="InterPro"/>
</dbReference>
<dbReference type="GO" id="GO:0006412">
    <property type="term" value="P:translation"/>
    <property type="evidence" value="ECO:0007669"/>
    <property type="project" value="UniProtKB-UniRule"/>
</dbReference>
<dbReference type="CDD" id="cd00353">
    <property type="entry name" value="Ribosomal_S15p_S13e"/>
    <property type="match status" value="1"/>
</dbReference>
<dbReference type="FunFam" id="1.10.287.10:FF:000002">
    <property type="entry name" value="30S ribosomal protein S15"/>
    <property type="match status" value="1"/>
</dbReference>
<dbReference type="Gene3D" id="6.10.250.3130">
    <property type="match status" value="1"/>
</dbReference>
<dbReference type="Gene3D" id="1.10.287.10">
    <property type="entry name" value="S15/NS1, RNA-binding"/>
    <property type="match status" value="1"/>
</dbReference>
<dbReference type="HAMAP" id="MF_01343_B">
    <property type="entry name" value="Ribosomal_uS15_B"/>
    <property type="match status" value="1"/>
</dbReference>
<dbReference type="InterPro" id="IPR000589">
    <property type="entry name" value="Ribosomal_uS15"/>
</dbReference>
<dbReference type="InterPro" id="IPR005290">
    <property type="entry name" value="Ribosomal_uS15_bac-type"/>
</dbReference>
<dbReference type="InterPro" id="IPR009068">
    <property type="entry name" value="uS15_NS1_RNA-bd_sf"/>
</dbReference>
<dbReference type="NCBIfam" id="TIGR00952">
    <property type="entry name" value="S15_bact"/>
    <property type="match status" value="1"/>
</dbReference>
<dbReference type="PANTHER" id="PTHR23321">
    <property type="entry name" value="RIBOSOMAL PROTEIN S15, BACTERIAL AND ORGANELLAR"/>
    <property type="match status" value="1"/>
</dbReference>
<dbReference type="PANTHER" id="PTHR23321:SF26">
    <property type="entry name" value="SMALL RIBOSOMAL SUBUNIT PROTEIN US15M"/>
    <property type="match status" value="1"/>
</dbReference>
<dbReference type="Pfam" id="PF00312">
    <property type="entry name" value="Ribosomal_S15"/>
    <property type="match status" value="1"/>
</dbReference>
<dbReference type="SMART" id="SM01387">
    <property type="entry name" value="Ribosomal_S15"/>
    <property type="match status" value="1"/>
</dbReference>
<dbReference type="SUPFAM" id="SSF47060">
    <property type="entry name" value="S15/NS1 RNA-binding domain"/>
    <property type="match status" value="1"/>
</dbReference>
<dbReference type="PROSITE" id="PS00362">
    <property type="entry name" value="RIBOSOMAL_S15"/>
    <property type="match status" value="1"/>
</dbReference>
<protein>
    <recommendedName>
        <fullName evidence="1">Small ribosomal subunit protein uS15</fullName>
    </recommendedName>
    <alternativeName>
        <fullName evidence="2">30S ribosomal protein S15</fullName>
    </alternativeName>
</protein>
<comment type="function">
    <text evidence="1">One of the primary rRNA binding proteins, it binds directly to 16S rRNA where it helps nucleate assembly of the platform of the 30S subunit by binding and bridging several RNA helices of the 16S rRNA.</text>
</comment>
<comment type="function">
    <text evidence="1">Forms an intersubunit bridge (bridge B4) with the 23S rRNA of the 50S subunit in the ribosome.</text>
</comment>
<comment type="subunit">
    <text evidence="1">Part of the 30S ribosomal subunit. Forms a bridge to the 50S subunit in the 70S ribosome, contacting the 23S rRNA.</text>
</comment>
<comment type="similarity">
    <text evidence="1">Belongs to the universal ribosomal protein uS15 family.</text>
</comment>
<gene>
    <name evidence="1" type="primary">rpsO</name>
    <name type="ordered locus">ECA0715</name>
</gene>
<proteinExistence type="inferred from homology"/>
<evidence type="ECO:0000255" key="1">
    <source>
        <dbReference type="HAMAP-Rule" id="MF_01343"/>
    </source>
</evidence>
<evidence type="ECO:0000305" key="2"/>
<name>RS15_PECAS</name>